<feature type="chain" id="PRO_0000448830" description="ATP-dependent kinase-like protein notR'">
    <location>
        <begin position="1"/>
        <end position="172"/>
    </location>
</feature>
<proteinExistence type="evidence at protein level"/>
<sequence length="172" mass="19243">MDGYHLPRAQLAAMPDPATAIYRRGAEFTFDGEGFYRLVQRLRERLTAASPTVFAPSFDHAIKDPVPDDVAISPGSRVIILEGLYLSLNREPWSSAAALMDESWFVGVDREIARARLVKRHVTSGIVPDTAAAEHRILSTDFLNADDIVKNRLPVQEMVPGNWRELSQDRLD</sequence>
<organism>
    <name type="scientific">Aspergillus versicolor</name>
    <dbReference type="NCBI Taxonomy" id="46472"/>
    <lineage>
        <taxon>Eukaryota</taxon>
        <taxon>Fungi</taxon>
        <taxon>Dikarya</taxon>
        <taxon>Ascomycota</taxon>
        <taxon>Pezizomycotina</taxon>
        <taxon>Eurotiomycetes</taxon>
        <taxon>Eurotiomycetidae</taxon>
        <taxon>Eurotiales</taxon>
        <taxon>Aspergillaceae</taxon>
        <taxon>Aspergillus</taxon>
        <taxon>Aspergillus subgen. Nidulantes</taxon>
    </lineage>
</organism>
<accession>L7WRZ7</accession>
<dbReference type="EC" id="2.7.1.-" evidence="5"/>
<dbReference type="EMBL" id="JQ708194">
    <property type="protein sequence ID" value="AGC83589.1"/>
    <property type="molecule type" value="Genomic_DNA"/>
</dbReference>
<dbReference type="SMR" id="L7WRZ7"/>
<dbReference type="VEuPathDB" id="FungiDB:ASPVEDRAFT_76489"/>
<dbReference type="GO" id="GO:0005524">
    <property type="term" value="F:ATP binding"/>
    <property type="evidence" value="ECO:0007669"/>
    <property type="project" value="UniProtKB-KW"/>
</dbReference>
<dbReference type="GO" id="GO:0016301">
    <property type="term" value="F:kinase activity"/>
    <property type="evidence" value="ECO:0007669"/>
    <property type="project" value="UniProtKB-KW"/>
</dbReference>
<dbReference type="Gene3D" id="3.40.50.300">
    <property type="entry name" value="P-loop containing nucleotide triphosphate hydrolases"/>
    <property type="match status" value="1"/>
</dbReference>
<dbReference type="InterPro" id="IPR027417">
    <property type="entry name" value="P-loop_NTPase"/>
</dbReference>
<dbReference type="PANTHER" id="PTHR10285">
    <property type="entry name" value="URIDINE KINASE"/>
    <property type="match status" value="1"/>
</dbReference>
<dbReference type="SUPFAM" id="SSF52540">
    <property type="entry name" value="P-loop containing nucleoside triphosphate hydrolases"/>
    <property type="match status" value="1"/>
</dbReference>
<gene>
    <name evidence="4" type="primary">notR'</name>
</gene>
<name>NOTR_ASPVE</name>
<reference key="1">
    <citation type="journal article" date="2012" name="Med. Chem. Commun.">
        <title>Comparative analysis of the biosynthetic systems for fungal bicyclo[2.2.2]diazaoctane indole alkaloids: the (+)/(-)-notoamide, paraherquamide and malbrancheamide pathways.</title>
        <authorList>
            <person name="Li S."/>
            <person name="Anand K."/>
            <person name="Tran H."/>
            <person name="Yu F."/>
            <person name="Finefield J.M."/>
            <person name="Sunderhaus J.D."/>
            <person name="McAfoos T.J."/>
            <person name="Tsukamoto S."/>
            <person name="Williams R.M."/>
            <person name="Sherman D.H."/>
        </authorList>
    </citation>
    <scope>NUCLEOTIDE SEQUENCE [GENOMIC DNA]</scope>
    <source>
        <strain>NRRL 35600</strain>
    </source>
</reference>
<reference key="2">
    <citation type="journal article" date="2007" name="Angew. Chem. Int. Ed.">
        <title>Notoamides A-D: prenylated indole alkaloids isolated from a marine-derived fungus, Aspergillus sp.</title>
        <authorList>
            <person name="Kato H."/>
            <person name="Yoshida T."/>
            <person name="Tokue T."/>
            <person name="Nojiri Y."/>
            <person name="Hirota H."/>
            <person name="Ohta T."/>
            <person name="Williams R.M."/>
            <person name="Tsukamoto S."/>
        </authorList>
    </citation>
    <scope>BIOTECHNOLOGY</scope>
</reference>
<reference key="3">
    <citation type="journal article" date="2013" name="Appl. Microbiol. Biotechnol.">
        <title>Identification of a brevianamide F reverse prenyltransferase BrePT from Aspergillus versicolor with a broad substrate specificity towards tryptophan-containing cyclic dipeptides.</title>
        <authorList>
            <person name="Yin S."/>
            <person name="Yu X."/>
            <person name="Wang Q."/>
            <person name="Liu X.Q."/>
            <person name="Li S.M."/>
        </authorList>
    </citation>
    <scope>FUNCTION</scope>
</reference>
<evidence type="ECO:0000269" key="1">
    <source>
    </source>
</evidence>
<evidence type="ECO:0000269" key="2">
    <source>
    </source>
</evidence>
<evidence type="ECO:0000269" key="3">
    <source>
    </source>
</evidence>
<evidence type="ECO:0000303" key="4">
    <source>
    </source>
</evidence>
<evidence type="ECO:0000305" key="5"/>
<evidence type="ECO:0000305" key="6">
    <source>
    </source>
</evidence>
<keyword id="KW-0067">ATP-binding</keyword>
<keyword id="KW-0418">Kinase</keyword>
<keyword id="KW-0547">Nucleotide-binding</keyword>
<keyword id="KW-0808">Transferase</keyword>
<protein>
    <recommendedName>
        <fullName evidence="4">ATP-dependent kinase-like protein notR'</fullName>
        <ecNumber evidence="5">2.7.1.-</ecNumber>
    </recommendedName>
    <alternativeName>
        <fullName evidence="4">Notoamide biosynthesis cluster protein R'</fullName>
    </alternativeName>
</protein>
<comment type="function">
    <text evidence="2 3 6">ATP-dependent kinase-like protein; part of the gene cluster that mediates the biosynthesis of notoamide, a fungal indole alkaloid that belongs to a family of natural products containing a characteristic bicyclo[2.2.2]diazaoctane core (PubMed:23213353). The first step of notoamide biosynthesis involves coupling of L-proline and L-tryptophan by the bimodular NRPS notE', to produce cyclo-L-tryptophan-L-proline called brevianamide F (Probable). The reverse prenyltransferase notF' then acts as a deoxybrevianamide E synthase and converts brevianamide F to deoxybrevianamide E via reverse prenylation at C-2 of the indole ring leading to the bicyclo[2.2.2]diazaoctane core (Probable) (PubMed:22660767). Deoxybrevianamide E is further hydroxylated at C-6 of the indole ring, likely catalyzed by the cytochrome P450 monooxygenase notG', to yield 6-hydroxy-deoxybrevianamide E (Probable). 6-hydroxy-deoxybrevianamide E is a specific substrate of the prenyltransferase notC' for normal prenylation at C-7 to produce 6-hydroxy-7-prenyl-deoxybrevianamide, also called notoamide S (Probable). As the proposed pivotal branching point in notoamide biosynthesis, notoamide S can be diverted to notoamide E through an oxidative pyran ring closure putatively catalyzed by either notH' cytochrome P450 monooxygenase or the notD' FAD-linked oxidoreductase (Probable). This step would be followed by an indole 2,3-epoxidation-initiated pinacol-like rearrangement catalyzed by the notB' FAD-dependent monooxygenase leading to the formation of notoamide C and notoamide D (Probable). On the other hand notoamide S is converted to notoamide T by notH' (or notD'), a bifunctional oxidase that also functions as the intramolecular Diels-Alderase responsible for generation of (-)-notoamide T (Probable). To generate antipodal (+)-notoaminide T, notH (or notD) in Aspergillus strain MF297-2 is expected to catalyze a Diels-Alder reaction leading to the opposite stereochemistry (Probable). The remaining oxidoreductase notD' (or notH') likely catalyzes the oxidative pyran ring formation to yield (-)-stephacidin A (Probable). The FAD-dependent monooxygenase notI' is highly similar to notB' and is predicted to catalyze a similar conversion from (-)-stephacidin A to (+)-notoamide B via the 2,3-epoxidation of (-)-stephacidin A followed by a pinacol-type rearrangement (Probable). Finally, it remains unclear which enzyme could be responsible for the final hydroxylation steps leading to notoamide A and sclerotiamide (Probable). The function of notQ' in the notoamide biosynthesis has not been determined yet (Probable).</text>
</comment>
<comment type="biotechnology">
    <text evidence="1">Notoamides have been shown to exhibit antitumoral activities (PubMed:17304611). Notoamides A-C show moderate cytotoxicity against HeLa and L1210 cells with IC(50) values in the range of 22-52 mg/ml, but the IC(50) value of notoamide D is greater than 100 mg/ml (PubMed:17304611). Moreover, notoamide C induces G2/M-cell cycle arrest at a concentration of 6.3 mg/ml (PubMed:17304611).</text>
</comment>
<comment type="similarity">
    <text evidence="5">Belongs to the YFH7 family.</text>
</comment>